<protein>
    <recommendedName>
        <fullName evidence="1">Small ribosomal subunit protein uS7</fullName>
    </recommendedName>
    <alternativeName>
        <fullName evidence="2">30S ribosomal protein S7</fullName>
    </alternativeName>
</protein>
<gene>
    <name evidence="1" type="primary">rpsG</name>
    <name type="ordered locus">Adeh_1949</name>
</gene>
<evidence type="ECO:0000255" key="1">
    <source>
        <dbReference type="HAMAP-Rule" id="MF_00480"/>
    </source>
</evidence>
<evidence type="ECO:0000305" key="2"/>
<sequence length="156" mass="18071">MPRRREVEKRKILPDPKFQDRIVAKFVNNLMRKGKKSTGERIIYGAFDQVEAKLKDDPLKVFKKALDNVKPVVEVKSRRVGGATYQVPVEVRQDRRTALAMRWLIDYSRGRGEKTMVEKLAGEIMDAASNRGNAVKKREDTHKMAEANKAFAHYRW</sequence>
<comment type="function">
    <text evidence="1">One of the primary rRNA binding proteins, it binds directly to 16S rRNA where it nucleates assembly of the head domain of the 30S subunit. Is located at the subunit interface close to the decoding center, probably blocks exit of the E-site tRNA.</text>
</comment>
<comment type="subunit">
    <text evidence="1">Part of the 30S ribosomal subunit. Contacts proteins S9 and S11.</text>
</comment>
<comment type="similarity">
    <text evidence="1">Belongs to the universal ribosomal protein uS7 family.</text>
</comment>
<reference key="1">
    <citation type="submission" date="2006-01" db="EMBL/GenBank/DDBJ databases">
        <title>Complete sequence of Anaeromyxobacter dehalogenans 2CP-C.</title>
        <authorList>
            <person name="Copeland A."/>
            <person name="Lucas S."/>
            <person name="Lapidus A."/>
            <person name="Barry K."/>
            <person name="Detter J.C."/>
            <person name="Glavina T."/>
            <person name="Hammon N."/>
            <person name="Israni S."/>
            <person name="Pitluck S."/>
            <person name="Brettin T."/>
            <person name="Bruce D."/>
            <person name="Han C."/>
            <person name="Tapia R."/>
            <person name="Gilna P."/>
            <person name="Kiss H."/>
            <person name="Schmutz J."/>
            <person name="Larimer F."/>
            <person name="Land M."/>
            <person name="Kyrpides N."/>
            <person name="Anderson I."/>
            <person name="Sanford R.A."/>
            <person name="Ritalahti K.M."/>
            <person name="Thomas H.S."/>
            <person name="Kirby J.R."/>
            <person name="Zhulin I.B."/>
            <person name="Loeffler F.E."/>
            <person name="Richardson P."/>
        </authorList>
    </citation>
    <scope>NUCLEOTIDE SEQUENCE [LARGE SCALE GENOMIC DNA]</scope>
    <source>
        <strain>2CP-C</strain>
    </source>
</reference>
<dbReference type="EMBL" id="CP000251">
    <property type="protein sequence ID" value="ABC81720.1"/>
    <property type="molecule type" value="Genomic_DNA"/>
</dbReference>
<dbReference type="RefSeq" id="WP_011421002.1">
    <property type="nucleotide sequence ID" value="NC_007760.1"/>
</dbReference>
<dbReference type="SMR" id="Q2IJ92"/>
<dbReference type="STRING" id="290397.Adeh_1949"/>
<dbReference type="KEGG" id="ade:Adeh_1949"/>
<dbReference type="eggNOG" id="COG0049">
    <property type="taxonomic scope" value="Bacteria"/>
</dbReference>
<dbReference type="HOGENOM" id="CLU_072226_1_1_7"/>
<dbReference type="OrthoDB" id="9807653at2"/>
<dbReference type="Proteomes" id="UP000001935">
    <property type="component" value="Chromosome"/>
</dbReference>
<dbReference type="GO" id="GO:0015935">
    <property type="term" value="C:small ribosomal subunit"/>
    <property type="evidence" value="ECO:0007669"/>
    <property type="project" value="InterPro"/>
</dbReference>
<dbReference type="GO" id="GO:0019843">
    <property type="term" value="F:rRNA binding"/>
    <property type="evidence" value="ECO:0007669"/>
    <property type="project" value="UniProtKB-UniRule"/>
</dbReference>
<dbReference type="GO" id="GO:0003735">
    <property type="term" value="F:structural constituent of ribosome"/>
    <property type="evidence" value="ECO:0007669"/>
    <property type="project" value="InterPro"/>
</dbReference>
<dbReference type="GO" id="GO:0000049">
    <property type="term" value="F:tRNA binding"/>
    <property type="evidence" value="ECO:0007669"/>
    <property type="project" value="UniProtKB-UniRule"/>
</dbReference>
<dbReference type="GO" id="GO:0006412">
    <property type="term" value="P:translation"/>
    <property type="evidence" value="ECO:0007669"/>
    <property type="project" value="UniProtKB-UniRule"/>
</dbReference>
<dbReference type="CDD" id="cd14869">
    <property type="entry name" value="uS7_Bacteria"/>
    <property type="match status" value="1"/>
</dbReference>
<dbReference type="FunFam" id="1.10.455.10:FF:000001">
    <property type="entry name" value="30S ribosomal protein S7"/>
    <property type="match status" value="1"/>
</dbReference>
<dbReference type="Gene3D" id="1.10.455.10">
    <property type="entry name" value="Ribosomal protein S7 domain"/>
    <property type="match status" value="1"/>
</dbReference>
<dbReference type="HAMAP" id="MF_00480_B">
    <property type="entry name" value="Ribosomal_uS7_B"/>
    <property type="match status" value="1"/>
</dbReference>
<dbReference type="InterPro" id="IPR000235">
    <property type="entry name" value="Ribosomal_uS7"/>
</dbReference>
<dbReference type="InterPro" id="IPR005717">
    <property type="entry name" value="Ribosomal_uS7_bac/org-type"/>
</dbReference>
<dbReference type="InterPro" id="IPR020606">
    <property type="entry name" value="Ribosomal_uS7_CS"/>
</dbReference>
<dbReference type="InterPro" id="IPR023798">
    <property type="entry name" value="Ribosomal_uS7_dom"/>
</dbReference>
<dbReference type="InterPro" id="IPR036823">
    <property type="entry name" value="Ribosomal_uS7_dom_sf"/>
</dbReference>
<dbReference type="NCBIfam" id="TIGR01029">
    <property type="entry name" value="rpsG_bact"/>
    <property type="match status" value="1"/>
</dbReference>
<dbReference type="PANTHER" id="PTHR11205">
    <property type="entry name" value="RIBOSOMAL PROTEIN S7"/>
    <property type="match status" value="1"/>
</dbReference>
<dbReference type="Pfam" id="PF00177">
    <property type="entry name" value="Ribosomal_S7"/>
    <property type="match status" value="1"/>
</dbReference>
<dbReference type="PIRSF" id="PIRSF002122">
    <property type="entry name" value="RPS7p_RPS7a_RPS5e_RPS7o"/>
    <property type="match status" value="1"/>
</dbReference>
<dbReference type="SUPFAM" id="SSF47973">
    <property type="entry name" value="Ribosomal protein S7"/>
    <property type="match status" value="1"/>
</dbReference>
<dbReference type="PROSITE" id="PS00052">
    <property type="entry name" value="RIBOSOMAL_S7"/>
    <property type="match status" value="1"/>
</dbReference>
<name>RS7_ANADE</name>
<proteinExistence type="inferred from homology"/>
<keyword id="KW-1185">Reference proteome</keyword>
<keyword id="KW-0687">Ribonucleoprotein</keyword>
<keyword id="KW-0689">Ribosomal protein</keyword>
<keyword id="KW-0694">RNA-binding</keyword>
<keyword id="KW-0699">rRNA-binding</keyword>
<keyword id="KW-0820">tRNA-binding</keyword>
<accession>Q2IJ92</accession>
<organism>
    <name type="scientific">Anaeromyxobacter dehalogenans (strain 2CP-C)</name>
    <dbReference type="NCBI Taxonomy" id="290397"/>
    <lineage>
        <taxon>Bacteria</taxon>
        <taxon>Pseudomonadati</taxon>
        <taxon>Myxococcota</taxon>
        <taxon>Myxococcia</taxon>
        <taxon>Myxococcales</taxon>
        <taxon>Cystobacterineae</taxon>
        <taxon>Anaeromyxobacteraceae</taxon>
        <taxon>Anaeromyxobacter</taxon>
    </lineage>
</organism>
<feature type="chain" id="PRO_0000241749" description="Small ribosomal subunit protein uS7">
    <location>
        <begin position="1"/>
        <end position="156"/>
    </location>
</feature>